<organism>
    <name type="scientific">Xenopus laevis</name>
    <name type="common">African clawed frog</name>
    <dbReference type="NCBI Taxonomy" id="8355"/>
    <lineage>
        <taxon>Eukaryota</taxon>
        <taxon>Metazoa</taxon>
        <taxon>Chordata</taxon>
        <taxon>Craniata</taxon>
        <taxon>Vertebrata</taxon>
        <taxon>Euteleostomi</taxon>
        <taxon>Amphibia</taxon>
        <taxon>Batrachia</taxon>
        <taxon>Anura</taxon>
        <taxon>Pipoidea</taxon>
        <taxon>Pipidae</taxon>
        <taxon>Xenopodinae</taxon>
        <taxon>Xenopus</taxon>
        <taxon>Xenopus</taxon>
    </lineage>
</organism>
<evidence type="ECO:0000250" key="1"/>
<evidence type="ECO:0000256" key="2">
    <source>
        <dbReference type="SAM" id="MobiDB-lite"/>
    </source>
</evidence>
<evidence type="ECO:0000305" key="3"/>
<dbReference type="EMBL" id="BC130167">
    <property type="protein sequence ID" value="AAI30168.1"/>
    <property type="molecule type" value="mRNA"/>
</dbReference>
<dbReference type="RefSeq" id="NP_001091280.1">
    <property type="nucleotide sequence ID" value="NM_001097811.1"/>
</dbReference>
<dbReference type="BioGRID" id="674370">
    <property type="interactions" value="1"/>
</dbReference>
<dbReference type="IntAct" id="A2BDB7">
    <property type="interactions" value="1"/>
</dbReference>
<dbReference type="DNASU" id="100037092"/>
<dbReference type="GeneID" id="100037092"/>
<dbReference type="KEGG" id="xla:100037092"/>
<dbReference type="AGR" id="Xenbase:XB-GENE-5805743"/>
<dbReference type="CTD" id="100037092"/>
<dbReference type="Xenbase" id="XB-GENE-5805743">
    <property type="gene designation" value="slc7a6os.L"/>
</dbReference>
<dbReference type="OrthoDB" id="6255506at2759"/>
<dbReference type="Proteomes" id="UP000186698">
    <property type="component" value="Chromosome 4L"/>
</dbReference>
<dbReference type="Bgee" id="100037092">
    <property type="expression patterns" value="Expressed in egg cell and 19 other cell types or tissues"/>
</dbReference>
<dbReference type="GO" id="GO:0005737">
    <property type="term" value="C:cytoplasm"/>
    <property type="evidence" value="ECO:0007669"/>
    <property type="project" value="UniProtKB-SubCell"/>
</dbReference>
<dbReference type="GO" id="GO:0005634">
    <property type="term" value="C:nucleus"/>
    <property type="evidence" value="ECO:0007669"/>
    <property type="project" value="UniProtKB-SubCell"/>
</dbReference>
<dbReference type="GO" id="GO:0032502">
    <property type="term" value="P:developmental process"/>
    <property type="evidence" value="ECO:0000318"/>
    <property type="project" value="GO_Central"/>
</dbReference>
<dbReference type="GO" id="GO:0015031">
    <property type="term" value="P:protein transport"/>
    <property type="evidence" value="ECO:0007669"/>
    <property type="project" value="UniProtKB-KW"/>
</dbReference>
<dbReference type="InterPro" id="IPR040218">
    <property type="entry name" value="SLC7A6OS"/>
</dbReference>
<dbReference type="InterPro" id="IPR013883">
    <property type="entry name" value="TF_Iwr1_dom"/>
</dbReference>
<dbReference type="PANTHER" id="PTHR31196">
    <property type="entry name" value="RNA POLYMERASE II NUCLEAR LOCALIZATION PROTEIN SLC7A6OS-RELATED"/>
    <property type="match status" value="1"/>
</dbReference>
<dbReference type="PANTHER" id="PTHR31196:SF2">
    <property type="entry name" value="RNA POLYMERASE II NUCLEAR LOCALIZATION PROTEIN SLC7A6OS-RELATED"/>
    <property type="match status" value="1"/>
</dbReference>
<dbReference type="Pfam" id="PF08574">
    <property type="entry name" value="Iwr1"/>
    <property type="match status" value="1"/>
</dbReference>
<reference key="1">
    <citation type="submission" date="2006-12" db="EMBL/GenBank/DDBJ databases">
        <authorList>
            <consortium name="NIH - Xenopus Gene Collection (XGC) project"/>
        </authorList>
    </citation>
    <scope>NUCLEOTIDE SEQUENCE [LARGE SCALE MRNA]</scope>
    <source>
        <tissue>Ovary</tissue>
    </source>
</reference>
<comment type="function">
    <text evidence="1">Directs RNA polymerase II nuclear import.</text>
</comment>
<comment type="subcellular location">
    <subcellularLocation>
        <location evidence="1">Cytoplasm</location>
    </subcellularLocation>
    <subcellularLocation>
        <location evidence="1">Nucleus</location>
    </subcellularLocation>
</comment>
<comment type="similarity">
    <text evidence="3">Belongs to the IWR1/SLC7A6OS family.</text>
</comment>
<protein>
    <recommendedName>
        <fullName>Probable RNA polymerase II nuclear localization protein SLC7A6OS</fullName>
    </recommendedName>
    <alternativeName>
        <fullName>Solute carrier family 7 member 6 opposite strand transcript homolog</fullName>
    </alternativeName>
</protein>
<gene>
    <name type="primary">slc7a6os</name>
</gene>
<proteinExistence type="evidence at transcript level"/>
<sequence length="313" mass="36426">MEAAVLRVKRKRGADPADALILSCKRIRTEDETKESSAVTTQVFRLAATVKSENEPLHKYVREAISRNQSCLTLRPSSESKQRIQEELRASKEAERQVSRYRIISSHRPNSEEDNVGASHLIGCSSQDVPSETQDEAEATEATKSHISSPFQLFDMVQEEPEQKYLEKDSEPETILCNSIKMIREHLTVSEAGQESEHREYVDEYVYDIYYSEASQHGWIQDILYVQPYTEEQELVSEEPEPEEIYEDEDDENEENNWRNDYPDEEDSDREERYIGYYEDGDEEEKSAGHAWKMYHRSSLREIGDDDENADLY</sequence>
<keyword id="KW-0963">Cytoplasm</keyword>
<keyword id="KW-0539">Nucleus</keyword>
<keyword id="KW-0653">Protein transport</keyword>
<keyword id="KW-1185">Reference proteome</keyword>
<keyword id="KW-0813">Transport</keyword>
<name>S7A6O_XENLA</name>
<accession>A2BDB7</accession>
<feature type="chain" id="PRO_0000289172" description="Probable RNA polymerase II nuclear localization protein SLC7A6OS">
    <location>
        <begin position="1"/>
        <end position="313"/>
    </location>
</feature>
<feature type="region of interest" description="Disordered" evidence="2">
    <location>
        <begin position="76"/>
        <end position="96"/>
    </location>
</feature>
<feature type="region of interest" description="Disordered" evidence="2">
    <location>
        <begin position="127"/>
        <end position="151"/>
    </location>
</feature>
<feature type="region of interest" description="Disordered" evidence="2">
    <location>
        <begin position="232"/>
        <end position="272"/>
    </location>
</feature>
<feature type="compositionally biased region" description="Basic and acidic residues" evidence="2">
    <location>
        <begin position="78"/>
        <end position="96"/>
    </location>
</feature>
<feature type="compositionally biased region" description="Acidic residues" evidence="2">
    <location>
        <begin position="232"/>
        <end position="255"/>
    </location>
</feature>